<organism>
    <name type="scientific">Influenza A virus (strain A/Chicken/Hong Kong/96.1/2002 H5N1 genotype Y)</name>
    <dbReference type="NCBI Taxonomy" id="279803"/>
    <lineage>
        <taxon>Viruses</taxon>
        <taxon>Riboviria</taxon>
        <taxon>Orthornavirae</taxon>
        <taxon>Negarnaviricota</taxon>
        <taxon>Polyploviricotina</taxon>
        <taxon>Insthoviricetes</taxon>
        <taxon>Articulavirales</taxon>
        <taxon>Orthomyxoviridae</taxon>
        <taxon>Alphainfluenzavirus</taxon>
        <taxon>Alphainfluenzavirus influenzae</taxon>
        <taxon>Influenza A virus</taxon>
    </lineage>
</organism>
<feature type="chain" id="PRO_0000311751" description="Non-structural protein 1">
    <location>
        <begin position="1"/>
        <end position="225"/>
    </location>
</feature>
<feature type="region of interest" description="RNA-binding and homodimerization" evidence="1">
    <location>
        <begin position="1"/>
        <end position="73"/>
    </location>
</feature>
<feature type="region of interest" description="CPSF4-binding" evidence="1">
    <location>
        <begin position="175"/>
        <end position="210"/>
    </location>
</feature>
<feature type="region of interest" description="Disordered" evidence="2">
    <location>
        <begin position="204"/>
        <end position="225"/>
    </location>
</feature>
<feature type="region of interest" description="PABPN1-binding" evidence="1">
    <location>
        <begin position="218"/>
        <end position="225"/>
    </location>
</feature>
<feature type="short sequence motif" description="Nuclear localization signal" evidence="1">
    <location>
        <begin position="34"/>
        <end position="38"/>
    </location>
</feature>
<feature type="short sequence motif" description="Nuclear export signal" evidence="1">
    <location>
        <begin position="132"/>
        <end position="141"/>
    </location>
</feature>
<name>NS1_I02A5</name>
<proteinExistence type="inferred from homology"/>
<keyword id="KW-0025">Alternative splicing</keyword>
<keyword id="KW-1262">Eukaryotic host gene expression shutoff by virus</keyword>
<keyword id="KW-1035">Host cytoplasm</keyword>
<keyword id="KW-1190">Host gene expression shutoff by virus</keyword>
<keyword id="KW-1192">Host mRNA suppression by virus</keyword>
<keyword id="KW-1048">Host nucleus</keyword>
<keyword id="KW-0945">Host-virus interaction</keyword>
<keyword id="KW-1090">Inhibition of host innate immune response by virus</keyword>
<keyword id="KW-1114">Inhibition of host interferon signaling pathway by virus</keyword>
<keyword id="KW-1102">Inhibition of host PKR by virus</keyword>
<keyword id="KW-1103">Inhibition of host pre-mRNA processing by virus</keyword>
<keyword id="KW-1088">Inhibition of host RIG-I by virus</keyword>
<keyword id="KW-1113">Inhibition of host RLR pathway by virus</keyword>
<keyword id="KW-0922">Interferon antiviral system evasion</keyword>
<keyword id="KW-0694">RNA-binding</keyword>
<keyword id="KW-0832">Ubl conjugation</keyword>
<keyword id="KW-0899">Viral immunoevasion</keyword>
<sequence>MDSNTVSSFQVDCFLWHVRKRFADQELGDAPFLDRLRRDQKSLRGRGNTLGLDIETATRAGKQIVERILEEESDEALKMPASRYLTDMTLEEMSRDWFMLMPKQKVAGSLCIKMDQAIMDKTIILKANFSVIFDRLETLILLRAFTEEGAIVGEISPLPSLPGHTDEDVKNAIGVLIGGLEWNDNTVRVSETIQRFAWRSSDEDGRLPLPPNQKRKMARTIESKV</sequence>
<comment type="function">
    <text evidence="1">Inhibits post-transcriptional processing of cellular pre-mRNA, by binding and inhibiting two cellular proteins that are required for the 3'-end processing of cellular pre-mRNAs: the 30 kDa cleavage and polyadenylation specificity factor/CPSF4 and the poly(A)-binding protein 2/PABPN1. In turn, unprocessed 3' end pre-mRNAs accumulate in the host nucleus and are no longer exported to the cytoplasm. Cellular protein synthesis is thereby shut off very early after virus infection. Viral protein synthesis is not affected by the inhibition of the cellular 3' end processing machinery because the poly(A) tails of viral mRNAs are produced by the viral polymerase through a stuttering mechanism. Prevents the establishment of the cellular antiviral state by inhibiting TRIM25-mediated RIGI ubiquitination, which normally triggers the antiviral transduction signal that leads to the activation of type I IFN genes by transcription factors IRF3 and IRF7. Also binds poly(A) and U6 snRNA. Inhibits the integrated stress response (ISR) in the infected cell by blocking dsRNA binding by EIF2AK2/PKR and further phosphorylation of EIF2S1/EIF-2ALPHA. Stress granule formation is thus inhibited, which allows protein synthesis and viral replication.</text>
</comment>
<comment type="subunit">
    <text evidence="1">Homodimer. Interacts with host TRIM25 (via coiled coil); this interaction specifically inhibits TRIM25 multimerization and TRIM25-mediated RIGI CARD ubiquitination. Interacts with human EIF2AK2/PKR, CPSF4, IVNS1ABP and PABPN1.</text>
</comment>
<comment type="subcellular location">
    <subcellularLocation>
        <location evidence="1">Host nucleus</location>
    </subcellularLocation>
    <subcellularLocation>
        <location evidence="1">Host cytoplasm</location>
    </subcellularLocation>
    <text evidence="1">In uninfected, transfected cells, NS1 is localized in the nucleus. Only in virus infected cells, the nuclear export signal is unveiled, presumably by a viral protein, and a fraction of NS1 is exported in the cytoplasm.</text>
</comment>
<comment type="alternative products">
    <event type="alternative splicing"/>
    <isoform>
        <id>Q6J871-1</id>
        <name>NS1</name>
        <sequence type="displayed"/>
    </isoform>
    <isoform>
        <id>P0C5U2-1</id>
        <name>NEP</name>
        <name>NS2</name>
        <sequence type="external"/>
    </isoform>
</comment>
<comment type="domain">
    <text evidence="1">The dsRNA-binding region is required for suppression of RNA silencing.</text>
</comment>
<comment type="PTM">
    <text evidence="1">Upon interferon induction, ISGylated via host HERC5; this results in the impairment of NS1 interaction with RNA targets due to its inability to form homodimers and to interact with host EIF2AK2/PKR.</text>
</comment>
<comment type="similarity">
    <text evidence="1">Belongs to the influenza A viruses NS1 family.</text>
</comment>
<gene>
    <name evidence="1" type="primary">NS</name>
</gene>
<organismHost>
    <name type="scientific">Aves</name>
    <dbReference type="NCBI Taxonomy" id="8782"/>
</organismHost>
<organismHost>
    <name type="scientific">Felis catus</name>
    <name type="common">Cat</name>
    <name type="synonym">Felis silvestris catus</name>
    <dbReference type="NCBI Taxonomy" id="9685"/>
</organismHost>
<organismHost>
    <name type="scientific">Homo sapiens</name>
    <name type="common">Human</name>
    <dbReference type="NCBI Taxonomy" id="9606"/>
</organismHost>
<organismHost>
    <name type="scientific">Panthera pardus</name>
    <name type="common">Leopard</name>
    <name type="synonym">Felis pardus</name>
    <dbReference type="NCBI Taxonomy" id="9691"/>
</organismHost>
<organismHost>
    <name type="scientific">Panthera tigris</name>
    <name type="common">Tiger</name>
    <dbReference type="NCBI Taxonomy" id="9694"/>
</organismHost>
<organismHost>
    <name type="scientific">Sus scrofa</name>
    <name type="common">Pig</name>
    <dbReference type="NCBI Taxonomy" id="9823"/>
</organismHost>
<accession>Q6J871</accession>
<reference key="1">
    <citation type="journal article" date="2004" name="Proc. Natl. Acad. Sci. U.S.A.">
        <title>H5N1 influenza: a protean pandemic threat.</title>
        <authorList>
            <person name="Guan Y."/>
            <person name="Poon L.L.M."/>
            <person name="Cheung C.Y."/>
            <person name="Ellis T.M."/>
            <person name="Lim W."/>
            <person name="Lipatov A.S."/>
            <person name="Chan K.H."/>
            <person name="Sturm-Ramirez K.M."/>
            <person name="Cheung C.L."/>
            <person name="Leung Y.H.C."/>
            <person name="Yuen K.Y."/>
            <person name="Webster R.G."/>
            <person name="Peiris J.S.M."/>
        </authorList>
    </citation>
    <scope>NUCLEOTIDE SEQUENCE [GENOMIC RNA]</scope>
</reference>
<evidence type="ECO:0000255" key="1">
    <source>
        <dbReference type="HAMAP-Rule" id="MF_04066"/>
    </source>
</evidence>
<evidence type="ECO:0000256" key="2">
    <source>
        <dbReference type="SAM" id="MobiDB-lite"/>
    </source>
</evidence>
<protein>
    <recommendedName>
        <fullName evidence="1">Non-structural protein 1</fullName>
        <shortName evidence="1">NS1</shortName>
    </recommendedName>
    <alternativeName>
        <fullName evidence="1">NS1A</fullName>
    </alternativeName>
</protein>
<dbReference type="EMBL" id="AY576377">
    <property type="protein sequence ID" value="AAT39026.1"/>
    <property type="molecule type" value="Genomic_DNA"/>
</dbReference>
<dbReference type="SMR" id="Q6J871"/>
<dbReference type="GO" id="GO:0030430">
    <property type="term" value="C:host cell cytoplasm"/>
    <property type="evidence" value="ECO:0007669"/>
    <property type="project" value="UniProtKB-SubCell"/>
</dbReference>
<dbReference type="GO" id="GO:0042025">
    <property type="term" value="C:host cell nucleus"/>
    <property type="evidence" value="ECO:0007669"/>
    <property type="project" value="UniProtKB-SubCell"/>
</dbReference>
<dbReference type="GO" id="GO:0030291">
    <property type="term" value="F:protein serine/threonine kinase inhibitor activity"/>
    <property type="evidence" value="ECO:0007669"/>
    <property type="project" value="UniProtKB-KW"/>
</dbReference>
<dbReference type="GO" id="GO:0003723">
    <property type="term" value="F:RNA binding"/>
    <property type="evidence" value="ECO:0007669"/>
    <property type="project" value="UniProtKB-KW"/>
</dbReference>
<dbReference type="GO" id="GO:0039540">
    <property type="term" value="P:symbiont-mediated suppression of host cytoplasmic pattern recognition receptor signaling pathway via inhibition of RIG-I activity"/>
    <property type="evidence" value="ECO:0007669"/>
    <property type="project" value="UniProtKB-KW"/>
</dbReference>
<dbReference type="GO" id="GO:0039657">
    <property type="term" value="P:symbiont-mediated suppression of host gene expression"/>
    <property type="evidence" value="ECO:0007669"/>
    <property type="project" value="UniProtKB-KW"/>
</dbReference>
<dbReference type="GO" id="GO:0039524">
    <property type="term" value="P:symbiont-mediated suppression of host mRNA processing"/>
    <property type="evidence" value="ECO:0007669"/>
    <property type="project" value="UniProtKB-KW"/>
</dbReference>
<dbReference type="GO" id="GO:0039580">
    <property type="term" value="P:symbiont-mediated suppression of host PKR/eIFalpha signaling"/>
    <property type="evidence" value="ECO:0007669"/>
    <property type="project" value="UniProtKB-KW"/>
</dbReference>
<dbReference type="GO" id="GO:0039502">
    <property type="term" value="P:symbiont-mediated suppression of host type I interferon-mediated signaling pathway"/>
    <property type="evidence" value="ECO:0007669"/>
    <property type="project" value="UniProtKB-KW"/>
</dbReference>
<dbReference type="FunFam" id="1.10.287.10:FF:000001">
    <property type="entry name" value="Non-structural protein 1"/>
    <property type="match status" value="1"/>
</dbReference>
<dbReference type="FunFam" id="3.30.420.330:FF:000001">
    <property type="entry name" value="Non-structural protein 1"/>
    <property type="match status" value="1"/>
</dbReference>
<dbReference type="Gene3D" id="3.30.420.330">
    <property type="entry name" value="Influenza virus non-structural protein, effector domain"/>
    <property type="match status" value="1"/>
</dbReference>
<dbReference type="Gene3D" id="1.10.287.10">
    <property type="entry name" value="S15/NS1, RNA-binding"/>
    <property type="match status" value="1"/>
</dbReference>
<dbReference type="HAMAP" id="MF_04066">
    <property type="entry name" value="INFV_NS1"/>
    <property type="match status" value="1"/>
</dbReference>
<dbReference type="InterPro" id="IPR004208">
    <property type="entry name" value="NS1"/>
</dbReference>
<dbReference type="InterPro" id="IPR000256">
    <property type="entry name" value="NS1A"/>
</dbReference>
<dbReference type="InterPro" id="IPR038064">
    <property type="entry name" value="NS1A_effect_dom-like_sf"/>
</dbReference>
<dbReference type="InterPro" id="IPR009068">
    <property type="entry name" value="uS15_NS1_RNA-bd_sf"/>
</dbReference>
<dbReference type="Pfam" id="PF00600">
    <property type="entry name" value="Flu_NS1"/>
    <property type="match status" value="1"/>
</dbReference>
<dbReference type="SUPFAM" id="SSF143021">
    <property type="entry name" value="Ns1 effector domain-like"/>
    <property type="match status" value="1"/>
</dbReference>
<dbReference type="SUPFAM" id="SSF47060">
    <property type="entry name" value="S15/NS1 RNA-binding domain"/>
    <property type="match status" value="1"/>
</dbReference>